<organismHost>
    <name type="scientific">Saccharolobus islandicus</name>
    <name type="common">Sulfolobus islandicus</name>
    <dbReference type="NCBI Taxonomy" id="43080"/>
</organismHost>
<gene>
    <name type="ORF">75</name>
</gene>
<organism>
    <name type="scientific">Sulfolobus islandicus rod-shaped virus 1</name>
    <name type="common">SIRV-1</name>
    <name type="synonym">Sulfolobus virus SIRV-1</name>
    <dbReference type="NCBI Taxonomy" id="157898"/>
    <lineage>
        <taxon>Viruses</taxon>
        <taxon>Adnaviria</taxon>
        <taxon>Zilligvirae</taxon>
        <taxon>Taleaviricota</taxon>
        <taxon>Tokiviricetes</taxon>
        <taxon>Ligamenvirales</taxon>
        <taxon>Rudiviridae</taxon>
        <taxon>Icerudivirus</taxon>
        <taxon>Icerudivirus SIRV1</taxon>
    </lineage>
</organism>
<protein>
    <recommendedName>
        <fullName>Uncharacterized protein 75</fullName>
    </recommendedName>
</protein>
<name>Y75_SIRV1</name>
<dbReference type="EMBL" id="AJ414696">
    <property type="protein sequence ID" value="CAC93998.1"/>
    <property type="molecule type" value="Genomic_DNA"/>
</dbReference>
<dbReference type="RefSeq" id="NP_666631.1">
    <property type="nucleotide sequence ID" value="NC_004087.1"/>
</dbReference>
<dbReference type="SMR" id="Q8QL13"/>
<dbReference type="KEGG" id="vg:951378"/>
<dbReference type="OrthoDB" id="24263at10239"/>
<dbReference type="Proteomes" id="UP000002270">
    <property type="component" value="Genome"/>
</dbReference>
<dbReference type="Gene3D" id="3.30.160.300">
    <property type="match status" value="1"/>
</dbReference>
<dbReference type="InterPro" id="IPR009804">
    <property type="entry name" value="SIFV_Orf14"/>
</dbReference>
<dbReference type="NCBIfam" id="NF033952">
    <property type="entry name" value="AcrID1_fam"/>
    <property type="match status" value="1"/>
</dbReference>
<dbReference type="Pfam" id="PF07118">
    <property type="entry name" value="DUF1374"/>
    <property type="match status" value="1"/>
</dbReference>
<keyword id="KW-1185">Reference proteome</keyword>
<proteinExistence type="predicted"/>
<feature type="chain" id="PRO_0000342293" description="Uncharacterized protein 75">
    <location>
        <begin position="1"/>
        <end position="75"/>
    </location>
</feature>
<reference key="1">
    <citation type="journal article" date="2001" name="Virology">
        <title>Sequences and replication of genomes of the archaeal rudiviruses SIRV1 and SIRV2: relationships to the archaeal lipothrixvirus SIFV and some eukaryal viruses.</title>
        <authorList>
            <person name="Peng X."/>
            <person name="Blum H."/>
            <person name="She Q."/>
            <person name="Mallok S."/>
            <person name="Bruegger K."/>
            <person name="Garrett R.A."/>
            <person name="Zillig W."/>
            <person name="Prangishvili D."/>
        </authorList>
    </citation>
    <scope>NUCLEOTIDE SEQUENCE [LARGE SCALE GENOMIC DNA]</scope>
    <source>
        <strain>Isolate variant VIII</strain>
    </source>
</reference>
<accession>Q8QL13</accession>
<sequence>MDLFFEDSIIQELSLKFKISFEINEEEYQQLIELAFSQFIYPSNDNIEIKINTKELADNEKALLYEIQLWRTKKS</sequence>